<sequence>MQLSLLKAKIHRATVSHSELNYEGSIAIDGLLLEAAGLYEFEKVHIWNVTNGARFTTYAIRAEHGSGIISVNGGAARYVQVGDLVIVAAFAQMSEDEAAVFRPNLVYVDAANAMTHTNHSIPTQVA</sequence>
<evidence type="ECO:0000255" key="1">
    <source>
        <dbReference type="HAMAP-Rule" id="MF_00446"/>
    </source>
</evidence>
<dbReference type="EC" id="4.1.1.11" evidence="1"/>
<dbReference type="EMBL" id="CP000941">
    <property type="protein sequence ID" value="ACA11232.1"/>
    <property type="molecule type" value="Genomic_DNA"/>
</dbReference>
<dbReference type="RefSeq" id="WP_004086272.1">
    <property type="nucleotide sequence ID" value="NC_010513.1"/>
</dbReference>
<dbReference type="SMR" id="B0U1Q4"/>
<dbReference type="KEGG" id="xfm:Xfasm12_0199"/>
<dbReference type="HOGENOM" id="CLU_115305_2_1_6"/>
<dbReference type="UniPathway" id="UPA00028">
    <property type="reaction ID" value="UER00002"/>
</dbReference>
<dbReference type="GO" id="GO:0005829">
    <property type="term" value="C:cytosol"/>
    <property type="evidence" value="ECO:0007669"/>
    <property type="project" value="TreeGrafter"/>
</dbReference>
<dbReference type="GO" id="GO:0004068">
    <property type="term" value="F:aspartate 1-decarboxylase activity"/>
    <property type="evidence" value="ECO:0007669"/>
    <property type="project" value="UniProtKB-UniRule"/>
</dbReference>
<dbReference type="GO" id="GO:0006523">
    <property type="term" value="P:alanine biosynthetic process"/>
    <property type="evidence" value="ECO:0007669"/>
    <property type="project" value="InterPro"/>
</dbReference>
<dbReference type="GO" id="GO:0015940">
    <property type="term" value="P:pantothenate biosynthetic process"/>
    <property type="evidence" value="ECO:0007669"/>
    <property type="project" value="UniProtKB-UniRule"/>
</dbReference>
<dbReference type="CDD" id="cd06919">
    <property type="entry name" value="Asp_decarbox"/>
    <property type="match status" value="1"/>
</dbReference>
<dbReference type="Gene3D" id="2.40.40.20">
    <property type="match status" value="1"/>
</dbReference>
<dbReference type="HAMAP" id="MF_00446">
    <property type="entry name" value="PanD"/>
    <property type="match status" value="1"/>
</dbReference>
<dbReference type="InterPro" id="IPR009010">
    <property type="entry name" value="Asp_de-COase-like_dom_sf"/>
</dbReference>
<dbReference type="InterPro" id="IPR003190">
    <property type="entry name" value="Asp_decarbox"/>
</dbReference>
<dbReference type="NCBIfam" id="TIGR00223">
    <property type="entry name" value="panD"/>
    <property type="match status" value="1"/>
</dbReference>
<dbReference type="PANTHER" id="PTHR21012">
    <property type="entry name" value="ASPARTATE 1-DECARBOXYLASE"/>
    <property type="match status" value="1"/>
</dbReference>
<dbReference type="PANTHER" id="PTHR21012:SF0">
    <property type="entry name" value="ASPARTATE 1-DECARBOXYLASE"/>
    <property type="match status" value="1"/>
</dbReference>
<dbReference type="Pfam" id="PF02261">
    <property type="entry name" value="Asp_decarbox"/>
    <property type="match status" value="1"/>
</dbReference>
<dbReference type="PIRSF" id="PIRSF006246">
    <property type="entry name" value="Asp_decarbox"/>
    <property type="match status" value="1"/>
</dbReference>
<dbReference type="SUPFAM" id="SSF50692">
    <property type="entry name" value="ADC-like"/>
    <property type="match status" value="1"/>
</dbReference>
<reference key="1">
    <citation type="journal article" date="2010" name="J. Bacteriol.">
        <title>Whole genome sequences of two Xylella fastidiosa strains (M12 and M23) causing almond leaf scorch disease in California.</title>
        <authorList>
            <person name="Chen J."/>
            <person name="Xie G."/>
            <person name="Han S."/>
            <person name="Chertkov O."/>
            <person name="Sims D."/>
            <person name="Civerolo E.L."/>
        </authorList>
    </citation>
    <scope>NUCLEOTIDE SEQUENCE [LARGE SCALE GENOMIC DNA]</scope>
    <source>
        <strain>M12</strain>
    </source>
</reference>
<comment type="function">
    <text evidence="1">Catalyzes the pyruvoyl-dependent decarboxylation of aspartate to produce beta-alanine.</text>
</comment>
<comment type="catalytic activity">
    <reaction evidence="1">
        <text>L-aspartate + H(+) = beta-alanine + CO2</text>
        <dbReference type="Rhea" id="RHEA:19497"/>
        <dbReference type="ChEBI" id="CHEBI:15378"/>
        <dbReference type="ChEBI" id="CHEBI:16526"/>
        <dbReference type="ChEBI" id="CHEBI:29991"/>
        <dbReference type="ChEBI" id="CHEBI:57966"/>
        <dbReference type="EC" id="4.1.1.11"/>
    </reaction>
</comment>
<comment type="cofactor">
    <cofactor evidence="1">
        <name>pyruvate</name>
        <dbReference type="ChEBI" id="CHEBI:15361"/>
    </cofactor>
    <text evidence="1">Binds 1 pyruvoyl group covalently per subunit.</text>
</comment>
<comment type="pathway">
    <text evidence="1">Cofactor biosynthesis; (R)-pantothenate biosynthesis; beta-alanine from L-aspartate: step 1/1.</text>
</comment>
<comment type="subunit">
    <text evidence="1">Heterooctamer of four alpha and four beta subunits.</text>
</comment>
<comment type="subcellular location">
    <subcellularLocation>
        <location evidence="1">Cytoplasm</location>
    </subcellularLocation>
</comment>
<comment type="PTM">
    <text evidence="1">Is synthesized initially as an inactive proenzyme, which is activated by self-cleavage at a specific serine bond to produce a beta-subunit with a hydroxyl group at its C-terminus and an alpha-subunit with a pyruvoyl group at its N-terminus.</text>
</comment>
<comment type="similarity">
    <text evidence="1">Belongs to the PanD family.</text>
</comment>
<protein>
    <recommendedName>
        <fullName evidence="1">Aspartate 1-decarboxylase</fullName>
        <ecNumber evidence="1">4.1.1.11</ecNumber>
    </recommendedName>
    <alternativeName>
        <fullName evidence="1">Aspartate alpha-decarboxylase</fullName>
    </alternativeName>
    <component>
        <recommendedName>
            <fullName evidence="1">Aspartate 1-decarboxylase beta chain</fullName>
        </recommendedName>
    </component>
    <component>
        <recommendedName>
            <fullName evidence="1">Aspartate 1-decarboxylase alpha chain</fullName>
        </recommendedName>
    </component>
</protein>
<gene>
    <name evidence="1" type="primary">panD</name>
    <name type="ordered locus">Xfasm12_0199</name>
</gene>
<organism>
    <name type="scientific">Xylella fastidiosa (strain M12)</name>
    <dbReference type="NCBI Taxonomy" id="405440"/>
    <lineage>
        <taxon>Bacteria</taxon>
        <taxon>Pseudomonadati</taxon>
        <taxon>Pseudomonadota</taxon>
        <taxon>Gammaproteobacteria</taxon>
        <taxon>Lysobacterales</taxon>
        <taxon>Lysobacteraceae</taxon>
        <taxon>Xylella</taxon>
    </lineage>
</organism>
<accession>B0U1Q4</accession>
<proteinExistence type="inferred from homology"/>
<feature type="chain" id="PRO_1000192063" description="Aspartate 1-decarboxylase beta chain" evidence="1">
    <location>
        <begin position="1"/>
        <end position="24"/>
    </location>
</feature>
<feature type="chain" id="PRO_1000192064" description="Aspartate 1-decarboxylase alpha chain" evidence="1">
    <location>
        <begin position="25"/>
        <end position="126"/>
    </location>
</feature>
<feature type="active site" description="Schiff-base intermediate with substrate; via pyruvic acid" evidence="1">
    <location>
        <position position="25"/>
    </location>
</feature>
<feature type="active site" description="Proton donor" evidence="1">
    <location>
        <position position="58"/>
    </location>
</feature>
<feature type="binding site" evidence="1">
    <location>
        <position position="57"/>
    </location>
    <ligand>
        <name>substrate</name>
    </ligand>
</feature>
<feature type="binding site" evidence="1">
    <location>
        <begin position="73"/>
        <end position="75"/>
    </location>
    <ligand>
        <name>substrate</name>
    </ligand>
</feature>
<feature type="modified residue" description="Pyruvic acid (Ser)" evidence="1">
    <location>
        <position position="25"/>
    </location>
</feature>
<name>PAND_XYLFM</name>
<keyword id="KW-0068">Autocatalytic cleavage</keyword>
<keyword id="KW-0963">Cytoplasm</keyword>
<keyword id="KW-0210">Decarboxylase</keyword>
<keyword id="KW-0456">Lyase</keyword>
<keyword id="KW-0566">Pantothenate biosynthesis</keyword>
<keyword id="KW-0670">Pyruvate</keyword>
<keyword id="KW-0704">Schiff base</keyword>
<keyword id="KW-0865">Zymogen</keyword>